<comment type="function">
    <text evidence="1">Isomerase that catalyzes the conversion of deoxy-ribose 1-phosphate (dRib-1-P) and ribose 1-phosphate (Rib-1-P) to deoxy-ribose 5-phosphate (dRib-5-P) and ribose 5-phosphate (Rib-5-P), respectively.</text>
</comment>
<comment type="catalytic activity">
    <reaction evidence="1">
        <text>2-deoxy-alpha-D-ribose 1-phosphate = 2-deoxy-D-ribose 5-phosphate</text>
        <dbReference type="Rhea" id="RHEA:27658"/>
        <dbReference type="ChEBI" id="CHEBI:57259"/>
        <dbReference type="ChEBI" id="CHEBI:62877"/>
        <dbReference type="EC" id="5.4.2.7"/>
    </reaction>
</comment>
<comment type="catalytic activity">
    <reaction evidence="1">
        <text>alpha-D-ribose 1-phosphate = D-ribose 5-phosphate</text>
        <dbReference type="Rhea" id="RHEA:18793"/>
        <dbReference type="ChEBI" id="CHEBI:57720"/>
        <dbReference type="ChEBI" id="CHEBI:78346"/>
        <dbReference type="EC" id="5.4.2.7"/>
    </reaction>
</comment>
<comment type="cofactor">
    <cofactor evidence="1">
        <name>Mn(2+)</name>
        <dbReference type="ChEBI" id="CHEBI:29035"/>
    </cofactor>
    <text evidence="1">Binds 2 manganese ions.</text>
</comment>
<comment type="pathway">
    <text evidence="1">Carbohydrate degradation; 2-deoxy-D-ribose 1-phosphate degradation; D-glyceraldehyde 3-phosphate and acetaldehyde from 2-deoxy-alpha-D-ribose 1-phosphate: step 1/2.</text>
</comment>
<comment type="subcellular location">
    <subcellularLocation>
        <location evidence="1">Cytoplasm</location>
    </subcellularLocation>
</comment>
<comment type="similarity">
    <text evidence="1">Belongs to the phosphopentomutase family.</text>
</comment>
<reference key="1">
    <citation type="journal article" date="2008" name="PLoS ONE">
        <title>A recalibrated molecular clock and independent origins for the cholera pandemic clones.</title>
        <authorList>
            <person name="Feng L."/>
            <person name="Reeves P.R."/>
            <person name="Lan R."/>
            <person name="Ren Y."/>
            <person name="Gao C."/>
            <person name="Zhou Z."/>
            <person name="Ren Y."/>
            <person name="Cheng J."/>
            <person name="Wang W."/>
            <person name="Wang J."/>
            <person name="Qian W."/>
            <person name="Li D."/>
            <person name="Wang L."/>
        </authorList>
    </citation>
    <scope>NUCLEOTIDE SEQUENCE [LARGE SCALE GENOMIC DNA]</scope>
    <source>
        <strain>M66-2</strain>
    </source>
</reference>
<evidence type="ECO:0000255" key="1">
    <source>
        <dbReference type="HAMAP-Rule" id="MF_00740"/>
    </source>
</evidence>
<organism>
    <name type="scientific">Vibrio cholerae serotype O1 (strain M66-2)</name>
    <dbReference type="NCBI Taxonomy" id="579112"/>
    <lineage>
        <taxon>Bacteria</taxon>
        <taxon>Pseudomonadati</taxon>
        <taxon>Pseudomonadota</taxon>
        <taxon>Gammaproteobacteria</taxon>
        <taxon>Vibrionales</taxon>
        <taxon>Vibrionaceae</taxon>
        <taxon>Vibrio</taxon>
    </lineage>
</organism>
<feature type="chain" id="PRO_1000148259" description="Phosphopentomutase">
    <location>
        <begin position="1"/>
        <end position="406"/>
    </location>
</feature>
<feature type="binding site" evidence="1">
    <location>
        <position position="10"/>
    </location>
    <ligand>
        <name>Mn(2+)</name>
        <dbReference type="ChEBI" id="CHEBI:29035"/>
        <label>1</label>
    </ligand>
</feature>
<feature type="binding site" evidence="1">
    <location>
        <position position="305"/>
    </location>
    <ligand>
        <name>Mn(2+)</name>
        <dbReference type="ChEBI" id="CHEBI:29035"/>
        <label>2</label>
    </ligand>
</feature>
<feature type="binding site" evidence="1">
    <location>
        <position position="310"/>
    </location>
    <ligand>
        <name>Mn(2+)</name>
        <dbReference type="ChEBI" id="CHEBI:29035"/>
        <label>2</label>
    </ligand>
</feature>
<feature type="binding site" evidence="1">
    <location>
        <position position="346"/>
    </location>
    <ligand>
        <name>Mn(2+)</name>
        <dbReference type="ChEBI" id="CHEBI:29035"/>
        <label>1</label>
    </ligand>
</feature>
<feature type="binding site" evidence="1">
    <location>
        <position position="347"/>
    </location>
    <ligand>
        <name>Mn(2+)</name>
        <dbReference type="ChEBI" id="CHEBI:29035"/>
        <label>1</label>
    </ligand>
</feature>
<feature type="binding site" evidence="1">
    <location>
        <position position="358"/>
    </location>
    <ligand>
        <name>Mn(2+)</name>
        <dbReference type="ChEBI" id="CHEBI:29035"/>
        <label>2</label>
    </ligand>
</feature>
<gene>
    <name evidence="1" type="primary">deoB</name>
    <name type="ordered locus">VCM66_2271</name>
</gene>
<protein>
    <recommendedName>
        <fullName evidence="1">Phosphopentomutase</fullName>
        <ecNumber evidence="1">5.4.2.7</ecNumber>
    </recommendedName>
    <alternativeName>
        <fullName evidence="1">Phosphodeoxyribomutase</fullName>
    </alternativeName>
</protein>
<accession>C3LQC0</accession>
<name>DEOB_VIBCM</name>
<keyword id="KW-0963">Cytoplasm</keyword>
<keyword id="KW-0413">Isomerase</keyword>
<keyword id="KW-0464">Manganese</keyword>
<keyword id="KW-0479">Metal-binding</keyword>
<dbReference type="EC" id="5.4.2.7" evidence="1"/>
<dbReference type="EMBL" id="CP001233">
    <property type="protein sequence ID" value="ACP06572.1"/>
    <property type="molecule type" value="Genomic_DNA"/>
</dbReference>
<dbReference type="RefSeq" id="WP_000816440.1">
    <property type="nucleotide sequence ID" value="NC_012578.1"/>
</dbReference>
<dbReference type="SMR" id="C3LQC0"/>
<dbReference type="KEGG" id="vcm:VCM66_2271"/>
<dbReference type="HOGENOM" id="CLU_053861_0_0_6"/>
<dbReference type="UniPathway" id="UPA00002">
    <property type="reaction ID" value="UER00467"/>
</dbReference>
<dbReference type="Proteomes" id="UP000001217">
    <property type="component" value="Chromosome I"/>
</dbReference>
<dbReference type="GO" id="GO:0005829">
    <property type="term" value="C:cytosol"/>
    <property type="evidence" value="ECO:0007669"/>
    <property type="project" value="TreeGrafter"/>
</dbReference>
<dbReference type="GO" id="GO:0000287">
    <property type="term" value="F:magnesium ion binding"/>
    <property type="evidence" value="ECO:0007669"/>
    <property type="project" value="InterPro"/>
</dbReference>
<dbReference type="GO" id="GO:0030145">
    <property type="term" value="F:manganese ion binding"/>
    <property type="evidence" value="ECO:0007669"/>
    <property type="project" value="UniProtKB-UniRule"/>
</dbReference>
<dbReference type="GO" id="GO:0008973">
    <property type="term" value="F:phosphopentomutase activity"/>
    <property type="evidence" value="ECO:0007669"/>
    <property type="project" value="UniProtKB-UniRule"/>
</dbReference>
<dbReference type="GO" id="GO:0006018">
    <property type="term" value="P:2-deoxyribose 1-phosphate catabolic process"/>
    <property type="evidence" value="ECO:0007669"/>
    <property type="project" value="UniProtKB-UniRule"/>
</dbReference>
<dbReference type="GO" id="GO:0006015">
    <property type="term" value="P:5-phosphoribose 1-diphosphate biosynthetic process"/>
    <property type="evidence" value="ECO:0007669"/>
    <property type="project" value="UniProtKB-UniPathway"/>
</dbReference>
<dbReference type="GO" id="GO:0043094">
    <property type="term" value="P:metabolic compound salvage"/>
    <property type="evidence" value="ECO:0007669"/>
    <property type="project" value="InterPro"/>
</dbReference>
<dbReference type="GO" id="GO:0009117">
    <property type="term" value="P:nucleotide metabolic process"/>
    <property type="evidence" value="ECO:0007669"/>
    <property type="project" value="InterPro"/>
</dbReference>
<dbReference type="CDD" id="cd16009">
    <property type="entry name" value="PPM"/>
    <property type="match status" value="1"/>
</dbReference>
<dbReference type="FunFam" id="3.30.70.1250:FF:000001">
    <property type="entry name" value="Phosphopentomutase"/>
    <property type="match status" value="1"/>
</dbReference>
<dbReference type="Gene3D" id="3.40.720.10">
    <property type="entry name" value="Alkaline Phosphatase, subunit A"/>
    <property type="match status" value="1"/>
</dbReference>
<dbReference type="Gene3D" id="3.30.70.1250">
    <property type="entry name" value="Phosphopentomutase"/>
    <property type="match status" value="1"/>
</dbReference>
<dbReference type="HAMAP" id="MF_00740">
    <property type="entry name" value="Phosphopentomut"/>
    <property type="match status" value="1"/>
</dbReference>
<dbReference type="InterPro" id="IPR017850">
    <property type="entry name" value="Alkaline_phosphatase_core_sf"/>
</dbReference>
<dbReference type="InterPro" id="IPR010045">
    <property type="entry name" value="DeoB"/>
</dbReference>
<dbReference type="InterPro" id="IPR006124">
    <property type="entry name" value="Metalloenzyme"/>
</dbReference>
<dbReference type="InterPro" id="IPR024052">
    <property type="entry name" value="Phosphopentomutase_DeoB_cap_sf"/>
</dbReference>
<dbReference type="NCBIfam" id="TIGR01696">
    <property type="entry name" value="deoB"/>
    <property type="match status" value="1"/>
</dbReference>
<dbReference type="NCBIfam" id="NF003766">
    <property type="entry name" value="PRK05362.1"/>
    <property type="match status" value="1"/>
</dbReference>
<dbReference type="PANTHER" id="PTHR21110">
    <property type="entry name" value="PHOSPHOPENTOMUTASE"/>
    <property type="match status" value="1"/>
</dbReference>
<dbReference type="PANTHER" id="PTHR21110:SF0">
    <property type="entry name" value="PHOSPHOPENTOMUTASE"/>
    <property type="match status" value="1"/>
</dbReference>
<dbReference type="Pfam" id="PF01676">
    <property type="entry name" value="Metalloenzyme"/>
    <property type="match status" value="1"/>
</dbReference>
<dbReference type="PIRSF" id="PIRSF001491">
    <property type="entry name" value="Ppentomutase"/>
    <property type="match status" value="1"/>
</dbReference>
<dbReference type="SUPFAM" id="SSF53649">
    <property type="entry name" value="Alkaline phosphatase-like"/>
    <property type="match status" value="1"/>
</dbReference>
<dbReference type="SUPFAM" id="SSF143856">
    <property type="entry name" value="DeoB insert domain-like"/>
    <property type="match status" value="1"/>
</dbReference>
<sequence length="406" mass="44051">MKRAFILVLDSFGIGATADAQAFGDVGSDTLGHIADQCAQGLADNAERKGALQLPNLSKLGLAMAHKESTGRFAPGLDERADIIGAYAHAAELSSGKDTPSGHWEIAGVPVLFEWGYFSDKQNSFPKELTDRILARAGLDGFLGNCHASGTQVLDDLGEEHMRTGKPIFYTSADSVFQIACHEETFGLARLLELCQIAREELADYNIGRVIARPFVGPGKGQFARTGNRRDLSVEPPSATVLQKLVEEKQGRVVSIGKIADIYAYCGITDKVKATGIPDLFEATLEQIKQAGDNTIVFTNFVDFDSAYGHRRDVAGYAAALEYFDKRLPEVLALMQEDDILILTADHGCDPTWPGTDHTREHIPVLVYGKKVAPGSLGRRDTFADIGQTLASYFGTSPMDYGKNFL</sequence>
<proteinExistence type="inferred from homology"/>